<organism>
    <name type="scientific">Streptococcus gordonii (strain Challis / ATCC 35105 / BCRC 15272 / CH1 / DL1 / V288)</name>
    <dbReference type="NCBI Taxonomy" id="467705"/>
    <lineage>
        <taxon>Bacteria</taxon>
        <taxon>Bacillati</taxon>
        <taxon>Bacillota</taxon>
        <taxon>Bacilli</taxon>
        <taxon>Lactobacillales</taxon>
        <taxon>Streptococcaceae</taxon>
        <taxon>Streptococcus</taxon>
    </lineage>
</organism>
<comment type="function">
    <text evidence="1">Catalyzes the transfer of an acyl group from acyl-phosphate (acyl-PO(4)) to glycerol-3-phosphate (G3P) to form lysophosphatidic acid (LPA). This enzyme utilizes acyl-phosphate as fatty acyl donor, but not acyl-CoA or acyl-ACP.</text>
</comment>
<comment type="catalytic activity">
    <reaction evidence="1">
        <text>an acyl phosphate + sn-glycerol 3-phosphate = a 1-acyl-sn-glycero-3-phosphate + phosphate</text>
        <dbReference type="Rhea" id="RHEA:34075"/>
        <dbReference type="ChEBI" id="CHEBI:43474"/>
        <dbReference type="ChEBI" id="CHEBI:57597"/>
        <dbReference type="ChEBI" id="CHEBI:57970"/>
        <dbReference type="ChEBI" id="CHEBI:59918"/>
        <dbReference type="EC" id="2.3.1.275"/>
    </reaction>
</comment>
<comment type="pathway">
    <text evidence="1">Lipid metabolism; phospholipid metabolism.</text>
</comment>
<comment type="subunit">
    <text evidence="1">Probably interacts with PlsX.</text>
</comment>
<comment type="subcellular location">
    <subcellularLocation>
        <location evidence="1">Cell membrane</location>
        <topology evidence="1">Multi-pass membrane protein</topology>
    </subcellularLocation>
</comment>
<comment type="similarity">
    <text evidence="1">Belongs to the PlsY family.</text>
</comment>
<accession>Q9X972</accession>
<accession>A8AXM0</accession>
<proteinExistence type="inferred from homology"/>
<dbReference type="EC" id="2.3.1.275" evidence="1"/>
<dbReference type="EMBL" id="CP000725">
    <property type="protein sequence ID" value="ABV09391.1"/>
    <property type="molecule type" value="Genomic_DNA"/>
</dbReference>
<dbReference type="EMBL" id="AJ236899">
    <property type="protein sequence ID" value="CAB40549.1"/>
    <property type="molecule type" value="Genomic_DNA"/>
</dbReference>
<dbReference type="RefSeq" id="WP_012000642.1">
    <property type="nucleotide sequence ID" value="NC_009785.1"/>
</dbReference>
<dbReference type="SMR" id="Q9X972"/>
<dbReference type="STRING" id="467705.SGO_1246"/>
<dbReference type="KEGG" id="sgo:SGO_1246"/>
<dbReference type="eggNOG" id="COG0344">
    <property type="taxonomic scope" value="Bacteria"/>
</dbReference>
<dbReference type="HOGENOM" id="CLU_081254_0_0_9"/>
<dbReference type="UniPathway" id="UPA00085"/>
<dbReference type="Proteomes" id="UP000001131">
    <property type="component" value="Chromosome"/>
</dbReference>
<dbReference type="GO" id="GO:0005886">
    <property type="term" value="C:plasma membrane"/>
    <property type="evidence" value="ECO:0007669"/>
    <property type="project" value="UniProtKB-SubCell"/>
</dbReference>
<dbReference type="GO" id="GO:0043772">
    <property type="term" value="F:acyl-phosphate glycerol-3-phosphate acyltransferase activity"/>
    <property type="evidence" value="ECO:0007669"/>
    <property type="project" value="UniProtKB-UniRule"/>
</dbReference>
<dbReference type="GO" id="GO:0008654">
    <property type="term" value="P:phospholipid biosynthetic process"/>
    <property type="evidence" value="ECO:0007669"/>
    <property type="project" value="UniProtKB-UniRule"/>
</dbReference>
<dbReference type="HAMAP" id="MF_01043">
    <property type="entry name" value="PlsY"/>
    <property type="match status" value="1"/>
</dbReference>
<dbReference type="InterPro" id="IPR003811">
    <property type="entry name" value="G3P_acylTferase_PlsY"/>
</dbReference>
<dbReference type="NCBIfam" id="TIGR00023">
    <property type="entry name" value="glycerol-3-phosphate 1-O-acyltransferase PlsY"/>
    <property type="match status" value="1"/>
</dbReference>
<dbReference type="PANTHER" id="PTHR30309:SF0">
    <property type="entry name" value="GLYCEROL-3-PHOSPHATE ACYLTRANSFERASE-RELATED"/>
    <property type="match status" value="1"/>
</dbReference>
<dbReference type="PANTHER" id="PTHR30309">
    <property type="entry name" value="INNER MEMBRANE PROTEIN YGIH"/>
    <property type="match status" value="1"/>
</dbReference>
<dbReference type="Pfam" id="PF02660">
    <property type="entry name" value="G3P_acyltransf"/>
    <property type="match status" value="1"/>
</dbReference>
<dbReference type="SMART" id="SM01207">
    <property type="entry name" value="G3P_acyltransf"/>
    <property type="match status" value="1"/>
</dbReference>
<reference key="1">
    <citation type="journal article" date="2007" name="J. Bacteriol.">
        <title>Genome-wide transcriptional changes in Streptococcus gordonii in response to competence signaling peptide.</title>
        <authorList>
            <person name="Vickerman M.M."/>
            <person name="Iobst S."/>
            <person name="Jesionowski A.M."/>
            <person name="Gill S.R."/>
        </authorList>
    </citation>
    <scope>NUCLEOTIDE SEQUENCE [LARGE SCALE GENOMIC DNA]</scope>
    <source>
        <strain>Challis / ATCC 35105 / BCRC 15272 / CH1 / DL1 / V288</strain>
    </source>
</reference>
<reference key="2">
    <citation type="journal article" date="1999" name="Curr. Microbiol.">
        <title>Isolation and characterization of promoter regions from Streptococcus gordonii CH1.</title>
        <authorList>
            <person name="Vriesema A.J."/>
            <person name="Dankert J."/>
            <person name="Zaat S.A."/>
        </authorList>
    </citation>
    <scope>NUCLEOTIDE SEQUENCE [GENOMIC DNA] OF 1-168</scope>
</reference>
<gene>
    <name evidence="1" type="primary">plsY</name>
    <name type="ordered locus">SGO_1246</name>
</gene>
<keyword id="KW-1003">Cell membrane</keyword>
<keyword id="KW-0444">Lipid biosynthesis</keyword>
<keyword id="KW-0443">Lipid metabolism</keyword>
<keyword id="KW-0472">Membrane</keyword>
<keyword id="KW-0594">Phospholipid biosynthesis</keyword>
<keyword id="KW-1208">Phospholipid metabolism</keyword>
<keyword id="KW-1185">Reference proteome</keyword>
<keyword id="KW-0808">Transferase</keyword>
<keyword id="KW-0812">Transmembrane</keyword>
<keyword id="KW-1133">Transmembrane helix</keyword>
<name>PLSY_STRGC</name>
<evidence type="ECO:0000255" key="1">
    <source>
        <dbReference type="HAMAP-Rule" id="MF_01043"/>
    </source>
</evidence>
<evidence type="ECO:0000305" key="2"/>
<feature type="chain" id="PRO_0000188462" description="Glycerol-3-phosphate acyltransferase">
    <location>
        <begin position="1"/>
        <end position="214"/>
    </location>
</feature>
<feature type="transmembrane region" description="Helical" evidence="1">
    <location>
        <begin position="8"/>
        <end position="28"/>
    </location>
</feature>
<feature type="transmembrane region" description="Helical" evidence="1">
    <location>
        <begin position="70"/>
        <end position="90"/>
    </location>
</feature>
<feature type="transmembrane region" description="Helical" evidence="1">
    <location>
        <begin position="111"/>
        <end position="131"/>
    </location>
</feature>
<feature type="transmembrane region" description="Helical" evidence="1">
    <location>
        <begin position="144"/>
        <end position="164"/>
    </location>
</feature>
<feature type="transmembrane region" description="Helical" evidence="1">
    <location>
        <begin position="165"/>
        <end position="185"/>
    </location>
</feature>
<feature type="sequence conflict" description="In Ref. 2; CAB40549." evidence="2" ref="2">
    <original>V</original>
    <variation>D</variation>
    <location>
        <position position="56"/>
    </location>
</feature>
<protein>
    <recommendedName>
        <fullName evidence="1">Glycerol-3-phosphate acyltransferase</fullName>
    </recommendedName>
    <alternativeName>
        <fullName evidence="1">Acyl-PO4 G3P acyltransferase</fullName>
    </alternativeName>
    <alternativeName>
        <fullName evidence="1">Acyl-phosphate--glycerol-3-phosphate acyltransferase</fullName>
    </alternativeName>
    <alternativeName>
        <fullName evidence="1">G3P acyltransferase</fullName>
        <shortName evidence="1">GPAT</shortName>
        <ecNumber evidence="1">2.3.1.275</ecNumber>
    </alternativeName>
    <alternativeName>
        <fullName evidence="1">Lysophosphatidic acid synthase</fullName>
        <shortName evidence="1">LPA synthase</shortName>
    </alternativeName>
</protein>
<sequence>MINTILGLILAYLLGSIPTGLWIGQIFFKKNLREYGSGNTGTTNTFRILGKTAGTVTFAIDFLKGTLATLLPLFLHINGISPMIFGLIAVLGHTFPIFAEFKGGKAVATSAGVVLGFSPLFFSYLIIIFIVTLYLGSMISLASIVVAGFAIISVLIFPLLGIILPSYDLLFTLIIILLASIILIRHRDNMERIKNKSENLIPWGINITKQVPKK</sequence>